<reference key="1">
    <citation type="journal article" date="2008" name="J. Bacteriol.">
        <title>Complete genome sequence of the mosquitocidal bacterium Bacillus sphaericus C3-41 and comparison with those of closely related Bacillus species.</title>
        <authorList>
            <person name="Hu X."/>
            <person name="Fan W."/>
            <person name="Han B."/>
            <person name="Liu H."/>
            <person name="Zheng D."/>
            <person name="Li Q."/>
            <person name="Dong W."/>
            <person name="Yan J."/>
            <person name="Gao M."/>
            <person name="Berry C."/>
            <person name="Yuan Z."/>
        </authorList>
    </citation>
    <scope>NUCLEOTIDE SEQUENCE [LARGE SCALE GENOMIC DNA]</scope>
    <source>
        <strain>C3-41</strain>
    </source>
</reference>
<name>LIPM_LYSSC</name>
<accession>B1HS22</accession>
<protein>
    <recommendedName>
        <fullName evidence="1">Octanoyltransferase LipM</fullName>
        <ecNumber evidence="1">2.3.1.181</ecNumber>
    </recommendedName>
    <alternativeName>
        <fullName evidence="1">Octanoyl-[acyl-carrier-protein]:[GcvH] N-octanoyltransferase</fullName>
    </alternativeName>
</protein>
<keyword id="KW-0012">Acyltransferase</keyword>
<keyword id="KW-0808">Transferase</keyword>
<organism>
    <name type="scientific">Lysinibacillus sphaericus (strain C3-41)</name>
    <dbReference type="NCBI Taxonomy" id="444177"/>
    <lineage>
        <taxon>Bacteria</taxon>
        <taxon>Bacillati</taxon>
        <taxon>Bacillota</taxon>
        <taxon>Bacilli</taxon>
        <taxon>Bacillales</taxon>
        <taxon>Bacillaceae</taxon>
        <taxon>Lysinibacillus</taxon>
    </lineage>
</organism>
<feature type="chain" id="PRO_0000410859" description="Octanoyltransferase LipM">
    <location>
        <begin position="1"/>
        <end position="276"/>
    </location>
</feature>
<feature type="domain" description="BPL/LPL catalytic" evidence="2">
    <location>
        <begin position="31"/>
        <end position="246"/>
    </location>
</feature>
<feature type="active site" description="Acyl-thioester intermediate" evidence="1">
    <location>
        <position position="148"/>
    </location>
</feature>
<feature type="site" description="Lowers pKa of active site Cys" evidence="1">
    <location>
        <position position="163"/>
    </location>
</feature>
<sequence length="276" mass="31373">MTTWYFLNSGKCSPSFNMALDEALLDWHSEGLIPPVIRFYEWEPATLSIGYFQQAKKDINLDAVREQGLGFVRRPTGGRAVLHEHELTYSVIVTESYPDMPESVTEAYRVLSEGILQGFHNLGMDAYFSVPDTEEKRADLKSPKSAVCFDAPSWYELVVEGKKIAGSAQTRQKGVILQHGAILLDLDQEKLLSVFNFSSEEAKDRMRRKLPEKAVAINSLVDEPVTVEQCVTAFRDGFAKSLQIELKPFTLSEEQLEYVRALEEKKYACDEWNFKK</sequence>
<gene>
    <name evidence="1" type="primary">lipM</name>
    <name type="ordered locus">Bsph_3557</name>
</gene>
<proteinExistence type="inferred from homology"/>
<comment type="function">
    <text evidence="1">Catalyzes the transfer of endogenously produced octanoic acid from octanoyl-acyl-carrier-protein onto the lipoyl domain of GcvH, an intermediate carrier during protein lipoylation.</text>
</comment>
<comment type="catalytic activity">
    <reaction evidence="1">
        <text>octanoyl-[ACP] + L-lysyl-[protein] = N(6)-octanoyl-L-lysyl-[protein] + holo-[ACP] + H(+)</text>
        <dbReference type="Rhea" id="RHEA:17665"/>
        <dbReference type="Rhea" id="RHEA-COMP:9636"/>
        <dbReference type="Rhea" id="RHEA-COMP:9685"/>
        <dbReference type="Rhea" id="RHEA-COMP:9752"/>
        <dbReference type="Rhea" id="RHEA-COMP:9928"/>
        <dbReference type="ChEBI" id="CHEBI:15378"/>
        <dbReference type="ChEBI" id="CHEBI:29969"/>
        <dbReference type="ChEBI" id="CHEBI:64479"/>
        <dbReference type="ChEBI" id="CHEBI:78463"/>
        <dbReference type="ChEBI" id="CHEBI:78809"/>
        <dbReference type="EC" id="2.3.1.181"/>
    </reaction>
</comment>
<comment type="pathway">
    <text evidence="1">Protein modification; protein lipoylation via endogenous pathway; protein N(6)-(lipoyl)lysine from octanoyl-[acyl-carrier-protein].</text>
</comment>
<comment type="subunit">
    <text evidence="1">Monomer.</text>
</comment>
<comment type="miscellaneous">
    <text evidence="1">In the reaction, the free carboxyl group of octanoic acid is attached via an amide linkage to the epsilon-amino group of a specific lysine residue of lipoyl domains of lipoate-dependent enzymes. The reaction proceeds via an octanoyl-thioester enzyme intermediate.</text>
</comment>
<comment type="similarity">
    <text evidence="1">Belongs to the octanoyltransferase LipM family.</text>
</comment>
<comment type="sequence caution" evidence="3">
    <conflict type="erroneous initiation">
        <sequence resource="EMBL-CDS" id="ACA41045"/>
    </conflict>
    <text>Truncated N-terminus.</text>
</comment>
<evidence type="ECO:0000255" key="1">
    <source>
        <dbReference type="HAMAP-Rule" id="MF_02118"/>
    </source>
</evidence>
<evidence type="ECO:0000255" key="2">
    <source>
        <dbReference type="PROSITE-ProRule" id="PRU01067"/>
    </source>
</evidence>
<evidence type="ECO:0000305" key="3"/>
<dbReference type="EC" id="2.3.1.181" evidence="1"/>
<dbReference type="EMBL" id="CP000817">
    <property type="protein sequence ID" value="ACA41045.1"/>
    <property type="status" value="ALT_INIT"/>
    <property type="molecule type" value="Genomic_DNA"/>
</dbReference>
<dbReference type="RefSeq" id="WP_031417388.1">
    <property type="nucleotide sequence ID" value="NC_010382.1"/>
</dbReference>
<dbReference type="SMR" id="B1HS22"/>
<dbReference type="EnsemblBacteria" id="ACA41045">
    <property type="protein sequence ID" value="ACA41045"/>
    <property type="gene ID" value="Bsph_3557"/>
</dbReference>
<dbReference type="KEGG" id="lsp:Bsph_3557"/>
<dbReference type="HOGENOM" id="CLU_022986_5_0_9"/>
<dbReference type="Proteomes" id="UP000002164">
    <property type="component" value="Chromosome"/>
</dbReference>
<dbReference type="GO" id="GO:0033819">
    <property type="term" value="F:lipoyl(octanoyl) transferase activity"/>
    <property type="evidence" value="ECO:0007669"/>
    <property type="project" value="UniProtKB-UniRule"/>
</dbReference>
<dbReference type="GO" id="GO:0009107">
    <property type="term" value="P:lipoate biosynthetic process"/>
    <property type="evidence" value="ECO:0007669"/>
    <property type="project" value="UniProtKB-UniRule"/>
</dbReference>
<dbReference type="GO" id="GO:0036211">
    <property type="term" value="P:protein modification process"/>
    <property type="evidence" value="ECO:0007669"/>
    <property type="project" value="InterPro"/>
</dbReference>
<dbReference type="CDD" id="cd16443">
    <property type="entry name" value="LplA"/>
    <property type="match status" value="1"/>
</dbReference>
<dbReference type="Gene3D" id="3.30.930.10">
    <property type="entry name" value="Bira Bifunctional Protein, Domain 2"/>
    <property type="match status" value="1"/>
</dbReference>
<dbReference type="HAMAP" id="MF_02118">
    <property type="entry name" value="LipM"/>
    <property type="match status" value="1"/>
</dbReference>
<dbReference type="InterPro" id="IPR045864">
    <property type="entry name" value="aa-tRNA-synth_II/BPL/LPL"/>
</dbReference>
<dbReference type="InterPro" id="IPR004143">
    <property type="entry name" value="BPL_LPL_catalytic"/>
</dbReference>
<dbReference type="InterPro" id="IPR024898">
    <property type="entry name" value="LipM"/>
</dbReference>
<dbReference type="InterPro" id="IPR050664">
    <property type="entry name" value="Octanoyltrans_LipM/LipL"/>
</dbReference>
<dbReference type="PANTHER" id="PTHR43679:SF2">
    <property type="entry name" value="OCTANOYL-[GCVH]:PROTEIN N-OCTANOYLTRANSFERASE"/>
    <property type="match status" value="1"/>
</dbReference>
<dbReference type="PANTHER" id="PTHR43679">
    <property type="entry name" value="OCTANOYLTRANSFERASE LIPM-RELATED"/>
    <property type="match status" value="1"/>
</dbReference>
<dbReference type="Pfam" id="PF21948">
    <property type="entry name" value="LplA-B_cat"/>
    <property type="match status" value="1"/>
</dbReference>
<dbReference type="SUPFAM" id="SSF55681">
    <property type="entry name" value="Class II aaRS and biotin synthetases"/>
    <property type="match status" value="1"/>
</dbReference>
<dbReference type="PROSITE" id="PS51733">
    <property type="entry name" value="BPL_LPL_CATALYTIC"/>
    <property type="match status" value="1"/>
</dbReference>